<name>CCL11_MACMU</name>
<organism>
    <name type="scientific">Macaca mulatta</name>
    <name type="common">Rhesus macaque</name>
    <dbReference type="NCBI Taxonomy" id="9544"/>
    <lineage>
        <taxon>Eukaryota</taxon>
        <taxon>Metazoa</taxon>
        <taxon>Chordata</taxon>
        <taxon>Craniata</taxon>
        <taxon>Vertebrata</taxon>
        <taxon>Euteleostomi</taxon>
        <taxon>Mammalia</taxon>
        <taxon>Eutheria</taxon>
        <taxon>Euarchontoglires</taxon>
        <taxon>Primates</taxon>
        <taxon>Haplorrhini</taxon>
        <taxon>Catarrhini</taxon>
        <taxon>Cercopithecidae</taxon>
        <taxon>Cercopithecinae</taxon>
        <taxon>Macaca</taxon>
    </lineage>
</organism>
<comment type="function">
    <text evidence="2 3">In response to the presence of allergens, this protein directly promotes the accumulation of eosinophils (a prominent feature of allergic inflammatory reactions), but not lymphocytes, macrophages or neutrophils (By similarity). Binds to CCR3 (By similarity).</text>
</comment>
<comment type="subcellular location">
    <subcellularLocation>
        <location evidence="4">Secreted</location>
    </subcellularLocation>
</comment>
<comment type="similarity">
    <text evidence="5">Belongs to the intercrine beta (chemokine CC) family.</text>
</comment>
<protein>
    <recommendedName>
        <fullName>Eotaxin</fullName>
    </recommendedName>
    <alternativeName>
        <fullName>C-C motif chemokine 11</fullName>
    </alternativeName>
    <alternativeName>
        <fullName>Small-inducible cytokine A11</fullName>
    </alternativeName>
</protein>
<dbReference type="EMBL" id="AY049019">
    <property type="protein sequence ID" value="AAL13086.1"/>
    <property type="molecule type" value="mRNA"/>
</dbReference>
<dbReference type="SMR" id="Q8MIT7"/>
<dbReference type="FunCoup" id="Q8MIT7">
    <property type="interactions" value="568"/>
</dbReference>
<dbReference type="STRING" id="9544.ENSMMUP00000070332"/>
<dbReference type="GlyCosmos" id="Q8MIT7">
    <property type="glycosylation" value="1 site, No reported glycans"/>
</dbReference>
<dbReference type="PaxDb" id="9544-ENSMMUP00000012806"/>
<dbReference type="eggNOG" id="ENOG502S8M4">
    <property type="taxonomic scope" value="Eukaryota"/>
</dbReference>
<dbReference type="HOGENOM" id="CLU_141716_1_0_1"/>
<dbReference type="InParanoid" id="Q8MIT7"/>
<dbReference type="TreeFam" id="TF334888"/>
<dbReference type="Proteomes" id="UP000006718">
    <property type="component" value="Unassembled WGS sequence"/>
</dbReference>
<dbReference type="GO" id="GO:0005615">
    <property type="term" value="C:extracellular space"/>
    <property type="evidence" value="ECO:0000318"/>
    <property type="project" value="GO_Central"/>
</dbReference>
<dbReference type="GO" id="GO:0048020">
    <property type="term" value="F:CCR chemokine receptor binding"/>
    <property type="evidence" value="ECO:0000318"/>
    <property type="project" value="GO_Central"/>
</dbReference>
<dbReference type="GO" id="GO:0008009">
    <property type="term" value="F:chemokine activity"/>
    <property type="evidence" value="ECO:0000318"/>
    <property type="project" value="GO_Central"/>
</dbReference>
<dbReference type="GO" id="GO:0061844">
    <property type="term" value="P:antimicrobial humoral immune response mediated by antimicrobial peptide"/>
    <property type="evidence" value="ECO:0000318"/>
    <property type="project" value="GO_Central"/>
</dbReference>
<dbReference type="GO" id="GO:0070098">
    <property type="term" value="P:chemokine-mediated signaling pathway"/>
    <property type="evidence" value="ECO:0000318"/>
    <property type="project" value="GO_Central"/>
</dbReference>
<dbReference type="GO" id="GO:0048245">
    <property type="term" value="P:eosinophil chemotaxis"/>
    <property type="evidence" value="ECO:0000318"/>
    <property type="project" value="GO_Central"/>
</dbReference>
<dbReference type="GO" id="GO:0006954">
    <property type="term" value="P:inflammatory response"/>
    <property type="evidence" value="ECO:0000318"/>
    <property type="project" value="GO_Central"/>
</dbReference>
<dbReference type="GO" id="GO:0030335">
    <property type="term" value="P:positive regulation of cell migration"/>
    <property type="evidence" value="ECO:0000318"/>
    <property type="project" value="GO_Central"/>
</dbReference>
<dbReference type="CDD" id="cd00272">
    <property type="entry name" value="Chemokine_CC"/>
    <property type="match status" value="1"/>
</dbReference>
<dbReference type="FunFam" id="2.40.50.40:FF:000002">
    <property type="entry name" value="C-C motif chemokine"/>
    <property type="match status" value="1"/>
</dbReference>
<dbReference type="Gene3D" id="2.40.50.40">
    <property type="match status" value="1"/>
</dbReference>
<dbReference type="InterPro" id="IPR039809">
    <property type="entry name" value="Chemokine_b/g/d"/>
</dbReference>
<dbReference type="InterPro" id="IPR000827">
    <property type="entry name" value="Chemokine_CC_CS"/>
</dbReference>
<dbReference type="InterPro" id="IPR001811">
    <property type="entry name" value="Chemokine_IL8-like_dom"/>
</dbReference>
<dbReference type="InterPro" id="IPR036048">
    <property type="entry name" value="Interleukin_8-like_sf"/>
</dbReference>
<dbReference type="PANTHER" id="PTHR12015:SF146">
    <property type="entry name" value="EOTAXIN"/>
    <property type="match status" value="1"/>
</dbReference>
<dbReference type="PANTHER" id="PTHR12015">
    <property type="entry name" value="SMALL INDUCIBLE CYTOKINE A"/>
    <property type="match status" value="1"/>
</dbReference>
<dbReference type="Pfam" id="PF00048">
    <property type="entry name" value="IL8"/>
    <property type="match status" value="1"/>
</dbReference>
<dbReference type="SMART" id="SM00199">
    <property type="entry name" value="SCY"/>
    <property type="match status" value="1"/>
</dbReference>
<dbReference type="SUPFAM" id="SSF54117">
    <property type="entry name" value="Interleukin 8-like chemokines"/>
    <property type="match status" value="1"/>
</dbReference>
<dbReference type="PROSITE" id="PS00472">
    <property type="entry name" value="SMALL_CYTOKINES_CC"/>
    <property type="match status" value="1"/>
</dbReference>
<feature type="signal peptide" evidence="1">
    <location>
        <begin position="1"/>
        <end position="23"/>
    </location>
</feature>
<feature type="chain" id="PRO_0000005196" description="Eotaxin">
    <location>
        <begin position="24"/>
        <end position="97"/>
    </location>
</feature>
<feature type="glycosylation site" description="O-linked (GalNAc...) threonine" evidence="3">
    <location>
        <position position="94"/>
    </location>
</feature>
<feature type="disulfide bond" evidence="3">
    <location>
        <begin position="32"/>
        <end position="57"/>
    </location>
</feature>
<feature type="disulfide bond" evidence="3">
    <location>
        <begin position="33"/>
        <end position="73"/>
    </location>
</feature>
<gene>
    <name type="primary">CCL11</name>
    <name type="synonym">SCYA11</name>
</gene>
<evidence type="ECO:0000250" key="1"/>
<evidence type="ECO:0000250" key="2">
    <source>
        <dbReference type="UniProtKB" id="P48298"/>
    </source>
</evidence>
<evidence type="ECO:0000250" key="3">
    <source>
        <dbReference type="UniProtKB" id="P51671"/>
    </source>
</evidence>
<evidence type="ECO:0000250" key="4">
    <source>
        <dbReference type="UniProtKB" id="P97545"/>
    </source>
</evidence>
<evidence type="ECO:0000305" key="5"/>
<keyword id="KW-0145">Chemotaxis</keyword>
<keyword id="KW-0202">Cytokine</keyword>
<keyword id="KW-1015">Disulfide bond</keyword>
<keyword id="KW-0325">Glycoprotein</keyword>
<keyword id="KW-0395">Inflammatory response</keyword>
<keyword id="KW-1185">Reference proteome</keyword>
<keyword id="KW-0964">Secreted</keyword>
<keyword id="KW-0732">Signal</keyword>
<accession>Q8MIT7</accession>
<reference key="1">
    <citation type="submission" date="2001-07" db="EMBL/GenBank/DDBJ databases">
        <title>Molecular cloning of eotaxin/CCL11 and CCR3 from rhesus monkey. Functional expression and characterization of rhesus monkey CCR3 in murine L1-2 cells; generation of antibodies against rhesus CCR3.</title>
        <authorList>
            <person name="Zhang L."/>
            <person name="Soares M.P."/>
            <person name="Guan Y."/>
            <person name="Sirotina-Meisher A."/>
            <person name="Matheravidathu S."/>
            <person name="Iliff S.A."/>
            <person name="Mudgett J.S."/>
            <person name="Springer M.S."/>
            <person name="Daugherty B.L."/>
        </authorList>
    </citation>
    <scope>NUCLEOTIDE SEQUENCE [MRNA]</scope>
</reference>
<proteinExistence type="inferred from homology"/>
<sequence>MKVSTTLLWLLLVAAAFSPQGLTGPDSVATTCCFTLTNKKIPLQRLESYRRIISGKCPQKAVIFKTKLAKDICADPKKKWVQDSMKYLDRKSPTPKP</sequence>